<gene>
    <name evidence="1" type="primary">rbfA</name>
    <name type="ordered locus">Amuc_0955</name>
</gene>
<keyword id="KW-0963">Cytoplasm</keyword>
<keyword id="KW-1185">Reference proteome</keyword>
<keyword id="KW-0690">Ribosome biogenesis</keyword>
<name>RBFA_AKKM8</name>
<feature type="chain" id="PRO_1000193221" description="Ribosome-binding factor A">
    <location>
        <begin position="1"/>
        <end position="125"/>
    </location>
</feature>
<organism>
    <name type="scientific">Akkermansia muciniphila (strain ATCC BAA-835 / DSM 22959 / JCM 33894 / BCRC 81048 / CCUG 64013 / CIP 107961 / Muc)</name>
    <dbReference type="NCBI Taxonomy" id="349741"/>
    <lineage>
        <taxon>Bacteria</taxon>
        <taxon>Pseudomonadati</taxon>
        <taxon>Verrucomicrobiota</taxon>
        <taxon>Verrucomicrobiia</taxon>
        <taxon>Verrucomicrobiales</taxon>
        <taxon>Akkermansiaceae</taxon>
        <taxon>Akkermansia</taxon>
    </lineage>
</organism>
<proteinExistence type="inferred from homology"/>
<protein>
    <recommendedName>
        <fullName evidence="1">Ribosome-binding factor A</fullName>
    </recommendedName>
</protein>
<comment type="function">
    <text evidence="1">One of several proteins that assist in the late maturation steps of the functional core of the 30S ribosomal subunit. Associates with free 30S ribosomal subunits (but not with 30S subunits that are part of 70S ribosomes or polysomes). Required for efficient processing of 16S rRNA. May interact with the 5'-terminal helix region of 16S rRNA.</text>
</comment>
<comment type="subunit">
    <text evidence="1">Monomer. Binds 30S ribosomal subunits, but not 50S ribosomal subunits or 70S ribosomes.</text>
</comment>
<comment type="subcellular location">
    <subcellularLocation>
        <location evidence="1">Cytoplasm</location>
    </subcellularLocation>
</comment>
<comment type="similarity">
    <text evidence="1">Belongs to the RbfA family.</text>
</comment>
<dbReference type="EMBL" id="CP001071">
    <property type="protein sequence ID" value="ACD04787.1"/>
    <property type="molecule type" value="Genomic_DNA"/>
</dbReference>
<dbReference type="SMR" id="B2UQQ2"/>
<dbReference type="STRING" id="349741.Amuc_0955"/>
<dbReference type="PaxDb" id="349741-Amuc_0955"/>
<dbReference type="KEGG" id="amu:Amuc_0955"/>
<dbReference type="eggNOG" id="COG0858">
    <property type="taxonomic scope" value="Bacteria"/>
</dbReference>
<dbReference type="HOGENOM" id="CLU_089475_1_1_0"/>
<dbReference type="OrthoDB" id="9793478at2"/>
<dbReference type="Proteomes" id="UP000001031">
    <property type="component" value="Chromosome"/>
</dbReference>
<dbReference type="GO" id="GO:0005829">
    <property type="term" value="C:cytosol"/>
    <property type="evidence" value="ECO:0007669"/>
    <property type="project" value="TreeGrafter"/>
</dbReference>
<dbReference type="GO" id="GO:0043024">
    <property type="term" value="F:ribosomal small subunit binding"/>
    <property type="evidence" value="ECO:0007669"/>
    <property type="project" value="TreeGrafter"/>
</dbReference>
<dbReference type="GO" id="GO:0030490">
    <property type="term" value="P:maturation of SSU-rRNA"/>
    <property type="evidence" value="ECO:0007669"/>
    <property type="project" value="UniProtKB-UniRule"/>
</dbReference>
<dbReference type="Gene3D" id="3.30.300.20">
    <property type="match status" value="1"/>
</dbReference>
<dbReference type="HAMAP" id="MF_00003">
    <property type="entry name" value="RbfA"/>
    <property type="match status" value="1"/>
</dbReference>
<dbReference type="InterPro" id="IPR015946">
    <property type="entry name" value="KH_dom-like_a/b"/>
</dbReference>
<dbReference type="InterPro" id="IPR000238">
    <property type="entry name" value="RbfA"/>
</dbReference>
<dbReference type="InterPro" id="IPR023799">
    <property type="entry name" value="RbfA_dom_sf"/>
</dbReference>
<dbReference type="InterPro" id="IPR020053">
    <property type="entry name" value="Ribosome-bd_factorA_CS"/>
</dbReference>
<dbReference type="NCBIfam" id="TIGR00082">
    <property type="entry name" value="rbfA"/>
    <property type="match status" value="1"/>
</dbReference>
<dbReference type="PANTHER" id="PTHR33515">
    <property type="entry name" value="RIBOSOME-BINDING FACTOR A, CHLOROPLASTIC-RELATED"/>
    <property type="match status" value="1"/>
</dbReference>
<dbReference type="PANTHER" id="PTHR33515:SF1">
    <property type="entry name" value="RIBOSOME-BINDING FACTOR A, CHLOROPLASTIC-RELATED"/>
    <property type="match status" value="1"/>
</dbReference>
<dbReference type="Pfam" id="PF02033">
    <property type="entry name" value="RBFA"/>
    <property type="match status" value="1"/>
</dbReference>
<dbReference type="SUPFAM" id="SSF89919">
    <property type="entry name" value="Ribosome-binding factor A, RbfA"/>
    <property type="match status" value="1"/>
</dbReference>
<dbReference type="PROSITE" id="PS01319">
    <property type="entry name" value="RBFA"/>
    <property type="match status" value="1"/>
</dbReference>
<accession>B2UQQ2</accession>
<sequence length="125" mass="13989">MSRRTDKVNELLRREIGTTIQRDFEFPGTIVTVIEVEVTDDLKEGKVWVGVVGKMAPSQVLEKLNSRHGLIQSAVARRVVLRNTPRLTFRLDDSAQRGVDLVNLLEDIDKNLPKAPPADAENDGE</sequence>
<evidence type="ECO:0000255" key="1">
    <source>
        <dbReference type="HAMAP-Rule" id="MF_00003"/>
    </source>
</evidence>
<reference key="1">
    <citation type="journal article" date="2011" name="PLoS ONE">
        <title>The genome of Akkermansia muciniphila, a dedicated intestinal mucin degrader, and its use in exploring intestinal metagenomes.</title>
        <authorList>
            <person name="van Passel M.W."/>
            <person name="Kant R."/>
            <person name="Zoetendal E.G."/>
            <person name="Plugge C.M."/>
            <person name="Derrien M."/>
            <person name="Malfatti S.A."/>
            <person name="Chain P.S."/>
            <person name="Woyke T."/>
            <person name="Palva A."/>
            <person name="de Vos W.M."/>
            <person name="Smidt H."/>
        </authorList>
    </citation>
    <scope>NUCLEOTIDE SEQUENCE [LARGE SCALE GENOMIC DNA]</scope>
    <source>
        <strain>ATCC BAA-835 / DSM 22959 / JCM 33894 / BCRC 81048 / CCUG 64013 / CIP 107961 / Muc</strain>
    </source>
</reference>